<organism>
    <name type="scientific">Salmonella heidelberg (strain SL476)</name>
    <dbReference type="NCBI Taxonomy" id="454169"/>
    <lineage>
        <taxon>Bacteria</taxon>
        <taxon>Pseudomonadati</taxon>
        <taxon>Pseudomonadota</taxon>
        <taxon>Gammaproteobacteria</taxon>
        <taxon>Enterobacterales</taxon>
        <taxon>Enterobacteriaceae</taxon>
        <taxon>Salmonella</taxon>
    </lineage>
</organism>
<feature type="chain" id="PRO_1000188835" description="L-ribulose-5-phosphate 3-epimerase UlaE">
    <location>
        <begin position="1"/>
        <end position="284"/>
    </location>
</feature>
<keyword id="KW-0413">Isomerase</keyword>
<evidence type="ECO:0000255" key="1">
    <source>
        <dbReference type="HAMAP-Rule" id="MF_01951"/>
    </source>
</evidence>
<gene>
    <name evidence="1" type="primary">ulaE</name>
    <name type="ordered locus">SeHA_C4805</name>
</gene>
<sequence length="284" mass="31882">MLSKQIPLGIYEKALPAGECWLKRLTLAKELGFDFVEMSVDETDERLSRLDWSREQRLALVSAVAETGVRVPSMCLSAHRRFPLGSEDDAVRTQGLEIMRKAIQFAQDVGIRVIQLAGYDVYYQQANDETRCRFRDGLKESVDMASRAQVTLAMEIMDYPLMNSISKALGYAHYLNNPWFQLYPDIGNLSAWDNDVQMELQAGIGHIVAVHVKDTKPGVFKNVPFGEGVVDFERCFETLKQSGYCGPYLIEMWSETAENPAAEVAKARDWVKARMASAGLVEAA</sequence>
<proteinExistence type="inferred from homology"/>
<comment type="function">
    <text evidence="1">Catalyzes the isomerization of L-xylulose-5-phosphate to L-ribulose-5-phosphate. Is involved in the anaerobic L-ascorbate utilization.</text>
</comment>
<comment type="catalytic activity">
    <reaction evidence="1">
        <text>L-ribulose 5-phosphate = L-xylulose 5-phosphate</text>
        <dbReference type="Rhea" id="RHEA:18497"/>
        <dbReference type="ChEBI" id="CHEBI:57829"/>
        <dbReference type="ChEBI" id="CHEBI:58226"/>
        <dbReference type="EC" id="5.1.3.22"/>
    </reaction>
</comment>
<comment type="pathway">
    <text evidence="1">Cofactor degradation; L-ascorbate degradation; D-xylulose 5-phosphate from L-ascorbate: step 3/4.</text>
</comment>
<comment type="induction">
    <text evidence="1">Induced by L-ascorbate. Repressed by UlaR.</text>
</comment>
<comment type="similarity">
    <text evidence="1">Belongs to the L-ribulose-5-phosphate 3-epimerase family.</text>
</comment>
<dbReference type="EC" id="5.1.3.22" evidence="1"/>
<dbReference type="EMBL" id="CP001120">
    <property type="protein sequence ID" value="ACF67950.1"/>
    <property type="molecule type" value="Genomic_DNA"/>
</dbReference>
<dbReference type="RefSeq" id="WP_000949553.1">
    <property type="nucleotide sequence ID" value="NC_011083.1"/>
</dbReference>
<dbReference type="SMR" id="B4TFD1"/>
<dbReference type="KEGG" id="seh:SeHA_C4805"/>
<dbReference type="HOGENOM" id="CLU_082738_0_0_6"/>
<dbReference type="UniPathway" id="UPA00263">
    <property type="reaction ID" value="UER00379"/>
</dbReference>
<dbReference type="Proteomes" id="UP000001866">
    <property type="component" value="Chromosome"/>
</dbReference>
<dbReference type="GO" id="GO:0016861">
    <property type="term" value="F:intramolecular oxidoreductase activity, interconverting aldoses and ketoses"/>
    <property type="evidence" value="ECO:0007669"/>
    <property type="project" value="InterPro"/>
</dbReference>
<dbReference type="GO" id="GO:0034015">
    <property type="term" value="F:L-ribulose-5-phosphate 3-epimerase activity"/>
    <property type="evidence" value="ECO:0007669"/>
    <property type="project" value="UniProtKB-UniRule"/>
</dbReference>
<dbReference type="GO" id="GO:0019854">
    <property type="term" value="P:L-ascorbic acid catabolic process"/>
    <property type="evidence" value="ECO:0007669"/>
    <property type="project" value="UniProtKB-UniRule"/>
</dbReference>
<dbReference type="FunFam" id="3.20.20.150:FF:000003">
    <property type="entry name" value="L-ribulose-5-phosphate 3-epimerase UlaE"/>
    <property type="match status" value="1"/>
</dbReference>
<dbReference type="Gene3D" id="3.20.20.150">
    <property type="entry name" value="Divalent-metal-dependent TIM barrel enzymes"/>
    <property type="match status" value="1"/>
</dbReference>
<dbReference type="HAMAP" id="MF_01951">
    <property type="entry name" value="UlaE"/>
    <property type="match status" value="1"/>
</dbReference>
<dbReference type="InterPro" id="IPR004560">
    <property type="entry name" value="L-Ru-5P_3-Epase"/>
</dbReference>
<dbReference type="InterPro" id="IPR023492">
    <property type="entry name" value="L-Ru-5P_3-Epase_Enterobacteria"/>
</dbReference>
<dbReference type="InterPro" id="IPR050417">
    <property type="entry name" value="Sugar_Epim/Isomerase"/>
</dbReference>
<dbReference type="InterPro" id="IPR036237">
    <property type="entry name" value="Xyl_isomerase-like_sf"/>
</dbReference>
<dbReference type="InterPro" id="IPR013022">
    <property type="entry name" value="Xyl_isomerase-like_TIM-brl"/>
</dbReference>
<dbReference type="NCBIfam" id="TIGR00542">
    <property type="entry name" value="hxl6Piso_put"/>
    <property type="match status" value="1"/>
</dbReference>
<dbReference type="NCBIfam" id="NF009688">
    <property type="entry name" value="PRK13209.1"/>
    <property type="match status" value="1"/>
</dbReference>
<dbReference type="NCBIfam" id="NF009689">
    <property type="entry name" value="PRK13210.1"/>
    <property type="match status" value="1"/>
</dbReference>
<dbReference type="PANTHER" id="PTHR43489">
    <property type="entry name" value="ISOMERASE"/>
    <property type="match status" value="1"/>
</dbReference>
<dbReference type="PANTHER" id="PTHR43489:SF8">
    <property type="entry name" value="L-RIBULOSE-5-PHOSPHATE 3-EPIMERASE ULAE"/>
    <property type="match status" value="1"/>
</dbReference>
<dbReference type="Pfam" id="PF01261">
    <property type="entry name" value="AP_endonuc_2"/>
    <property type="match status" value="1"/>
</dbReference>
<dbReference type="SUPFAM" id="SSF51658">
    <property type="entry name" value="Xylose isomerase-like"/>
    <property type="match status" value="1"/>
</dbReference>
<protein>
    <recommendedName>
        <fullName evidence="1">L-ribulose-5-phosphate 3-epimerase UlaE</fullName>
        <ecNumber evidence="1">5.1.3.22</ecNumber>
    </recommendedName>
    <alternativeName>
        <fullName evidence="1">L-ascorbate utilization protein E</fullName>
    </alternativeName>
    <alternativeName>
        <fullName evidence="1">L-xylulose-5-phosphate 3-epimerase</fullName>
    </alternativeName>
</protein>
<name>ULAE_SALHS</name>
<reference key="1">
    <citation type="journal article" date="2011" name="J. Bacteriol.">
        <title>Comparative genomics of 28 Salmonella enterica isolates: evidence for CRISPR-mediated adaptive sublineage evolution.</title>
        <authorList>
            <person name="Fricke W.F."/>
            <person name="Mammel M.K."/>
            <person name="McDermott P.F."/>
            <person name="Tartera C."/>
            <person name="White D.G."/>
            <person name="Leclerc J.E."/>
            <person name="Ravel J."/>
            <person name="Cebula T.A."/>
        </authorList>
    </citation>
    <scope>NUCLEOTIDE SEQUENCE [LARGE SCALE GENOMIC DNA]</scope>
    <source>
        <strain>SL476</strain>
    </source>
</reference>
<accession>B4TFD1</accession>